<evidence type="ECO:0000250" key="1">
    <source>
        <dbReference type="UniProtKB" id="Q6PGF2"/>
    </source>
</evidence>
<evidence type="ECO:0000250" key="2">
    <source>
        <dbReference type="UniProtKB" id="Q8NDC4"/>
    </source>
</evidence>
<organism>
    <name type="scientific">Rattus norvegicus</name>
    <name type="common">Rat</name>
    <dbReference type="NCBI Taxonomy" id="10116"/>
    <lineage>
        <taxon>Eukaryota</taxon>
        <taxon>Metazoa</taxon>
        <taxon>Chordata</taxon>
        <taxon>Craniata</taxon>
        <taxon>Vertebrata</taxon>
        <taxon>Euteleostomi</taxon>
        <taxon>Mammalia</taxon>
        <taxon>Eutheria</taxon>
        <taxon>Euarchontoglires</taxon>
        <taxon>Glires</taxon>
        <taxon>Rodentia</taxon>
        <taxon>Myomorpha</taxon>
        <taxon>Muroidea</taxon>
        <taxon>Muridae</taxon>
        <taxon>Murinae</taxon>
        <taxon>Rattus</taxon>
    </lineage>
</organism>
<name>MORN4_RAT</name>
<protein>
    <recommendedName>
        <fullName>MORN repeat-containing protein 4</fullName>
    </recommendedName>
</protein>
<reference key="1">
    <citation type="journal article" date="2004" name="Genome Res.">
        <title>The status, quality, and expansion of the NIH full-length cDNA project: the Mammalian Gene Collection (MGC).</title>
        <authorList>
            <consortium name="The MGC Project Team"/>
        </authorList>
    </citation>
    <scope>NUCLEOTIDE SEQUENCE [LARGE SCALE MRNA]</scope>
    <source>
        <tissue>Brain</tissue>
    </source>
</reference>
<comment type="function">
    <text evidence="1">Plays a role in promoting axonal degeneration following neuronal injury by toxic insult or trauma.</text>
</comment>
<comment type="subunit">
    <text evidence="2">Interacts with MYO3A.</text>
</comment>
<comment type="subcellular location">
    <subcellularLocation>
        <location evidence="2">Cytoplasm</location>
    </subcellularLocation>
    <subcellularLocation>
        <location evidence="2">Cell projection</location>
        <location evidence="2">Filopodium tip</location>
    </subcellularLocation>
    <subcellularLocation>
        <location evidence="1">Cell projection</location>
        <location evidence="1">Stereocilium</location>
    </subcellularLocation>
    <text evidence="2">Found in the cytoplasm in the absence of MYO3A and localizes at filopodial tips in the presence of MYO3A.</text>
</comment>
<proteinExistence type="evidence at transcript level"/>
<accession>Q5BJS9</accession>
<dbReference type="EMBL" id="BC091345">
    <property type="protein sequence ID" value="AAH91345.1"/>
    <property type="molecule type" value="mRNA"/>
</dbReference>
<dbReference type="RefSeq" id="NP_001020146.1">
    <property type="nucleotide sequence ID" value="NM_001024975.1"/>
</dbReference>
<dbReference type="SMR" id="Q5BJS9"/>
<dbReference type="FunCoup" id="Q5BJS9">
    <property type="interactions" value="1791"/>
</dbReference>
<dbReference type="STRING" id="10116.ENSRNOP00000032408"/>
<dbReference type="PaxDb" id="10116-ENSRNOP00000032408"/>
<dbReference type="Ensembl" id="ENSRNOT00000037490.5">
    <property type="protein sequence ID" value="ENSRNOP00000032408.4"/>
    <property type="gene ID" value="ENSRNOG00000027156.5"/>
</dbReference>
<dbReference type="GeneID" id="293950"/>
<dbReference type="KEGG" id="rno:293950"/>
<dbReference type="UCSC" id="RGD:1307336">
    <property type="organism name" value="rat"/>
</dbReference>
<dbReference type="AGR" id="RGD:1307336"/>
<dbReference type="CTD" id="118812"/>
<dbReference type="RGD" id="1307336">
    <property type="gene designation" value="Morn4"/>
</dbReference>
<dbReference type="eggNOG" id="KOG0231">
    <property type="taxonomic scope" value="Eukaryota"/>
</dbReference>
<dbReference type="GeneTree" id="ENSGT00730000111173"/>
<dbReference type="HOGENOM" id="CLU_113346_0_0_1"/>
<dbReference type="InParanoid" id="Q5BJS9"/>
<dbReference type="OMA" id="FTRCDGM"/>
<dbReference type="OrthoDB" id="406044at2759"/>
<dbReference type="PhylomeDB" id="Q5BJS9"/>
<dbReference type="TreeFam" id="TF323893"/>
<dbReference type="PRO" id="PR:Q5BJS9"/>
<dbReference type="Proteomes" id="UP000002494">
    <property type="component" value="Chromosome 1"/>
</dbReference>
<dbReference type="Bgee" id="ENSRNOG00000027156">
    <property type="expression patterns" value="Expressed in testis and 19 other cell types or tissues"/>
</dbReference>
<dbReference type="ExpressionAtlas" id="Q5BJS9">
    <property type="expression patterns" value="baseline and differential"/>
</dbReference>
<dbReference type="GO" id="GO:0042995">
    <property type="term" value="C:cell projection"/>
    <property type="evidence" value="ECO:0000318"/>
    <property type="project" value="GO_Central"/>
</dbReference>
<dbReference type="GO" id="GO:0005737">
    <property type="term" value="C:cytoplasm"/>
    <property type="evidence" value="ECO:0000250"/>
    <property type="project" value="UniProtKB"/>
</dbReference>
<dbReference type="GO" id="GO:0032433">
    <property type="term" value="C:filopodium tip"/>
    <property type="evidence" value="ECO:0000250"/>
    <property type="project" value="UniProtKB"/>
</dbReference>
<dbReference type="GO" id="GO:0032426">
    <property type="term" value="C:stereocilium tip"/>
    <property type="evidence" value="ECO:0000250"/>
    <property type="project" value="UniProtKB"/>
</dbReference>
<dbReference type="GO" id="GO:0048678">
    <property type="term" value="P:response to axon injury"/>
    <property type="evidence" value="ECO:0000250"/>
    <property type="project" value="UniProtKB"/>
</dbReference>
<dbReference type="FunFam" id="2.20.110.10:FF:000011">
    <property type="entry name" value="MORN repeat-containing protein 4"/>
    <property type="match status" value="1"/>
</dbReference>
<dbReference type="FunFam" id="2.20.110.10:FF:000014">
    <property type="entry name" value="MORN repeat-containing protein 4"/>
    <property type="match status" value="1"/>
</dbReference>
<dbReference type="Gene3D" id="2.20.110.10">
    <property type="entry name" value="Histone H3 K4-specific methyltransferase SET7/9 N-terminal domain"/>
    <property type="match status" value="2"/>
</dbReference>
<dbReference type="InterPro" id="IPR003409">
    <property type="entry name" value="MORN"/>
</dbReference>
<dbReference type="InterPro" id="IPR052315">
    <property type="entry name" value="MORN4"/>
</dbReference>
<dbReference type="PANTHER" id="PTHR46614">
    <property type="entry name" value="MORN REPEAT-CONTAINING PROTEIN 4"/>
    <property type="match status" value="1"/>
</dbReference>
<dbReference type="PANTHER" id="PTHR46614:SF1">
    <property type="entry name" value="MORN REPEAT-CONTAINING PROTEIN 4"/>
    <property type="match status" value="1"/>
</dbReference>
<dbReference type="Pfam" id="PF02493">
    <property type="entry name" value="MORN"/>
    <property type="match status" value="4"/>
</dbReference>
<dbReference type="SMART" id="SM00698">
    <property type="entry name" value="MORN"/>
    <property type="match status" value="4"/>
</dbReference>
<dbReference type="SUPFAM" id="SSF82185">
    <property type="entry name" value="Histone H3 K4-specific methyltransferase SET7/9 N-terminal domain"/>
    <property type="match status" value="1"/>
</dbReference>
<gene>
    <name type="primary">Morn4</name>
</gene>
<keyword id="KW-0966">Cell projection</keyword>
<keyword id="KW-0963">Cytoplasm</keyword>
<keyword id="KW-1185">Reference proteome</keyword>
<keyword id="KW-0677">Repeat</keyword>
<feature type="chain" id="PRO_0000279491" description="MORN repeat-containing protein 4">
    <location>
        <begin position="1"/>
        <end position="146"/>
    </location>
</feature>
<feature type="repeat" description="MORN 1">
    <location>
        <begin position="16"/>
        <end position="38"/>
    </location>
</feature>
<feature type="repeat" description="MORN 2">
    <location>
        <begin position="39"/>
        <end position="61"/>
    </location>
</feature>
<feature type="repeat" description="MORN 3">
    <location>
        <begin position="62"/>
        <end position="84"/>
    </location>
</feature>
<feature type="repeat" description="MORN 4">
    <location>
        <begin position="85"/>
        <end position="107"/>
    </location>
</feature>
<sequence>MTLTKGSFTYSSGEEYRGEWKEGRRHGFGQLMFADGGTYLGHFENGLFNGFGVLTFSDGSRYEGEFSQGKFNGVGVFIRYDNMTFEGEFKNGRVDGFGLLTFPDGSHGLPRNEGLFENNKLLRREKCSAVVQRAQSASKSARNLTA</sequence>